<evidence type="ECO:0000255" key="1">
    <source>
        <dbReference type="HAMAP-Rule" id="MF_00008"/>
    </source>
</evidence>
<gene>
    <name evidence="1" type="primary">thyA</name>
    <name type="ordered locus">CPS_3621</name>
</gene>
<organism>
    <name type="scientific">Colwellia psychrerythraea (strain 34H / ATCC BAA-681)</name>
    <name type="common">Vibrio psychroerythus</name>
    <dbReference type="NCBI Taxonomy" id="167879"/>
    <lineage>
        <taxon>Bacteria</taxon>
        <taxon>Pseudomonadati</taxon>
        <taxon>Pseudomonadota</taxon>
        <taxon>Gammaproteobacteria</taxon>
        <taxon>Alteromonadales</taxon>
        <taxon>Colwelliaceae</taxon>
        <taxon>Colwellia</taxon>
    </lineage>
</organism>
<comment type="function">
    <text evidence="1">Catalyzes the reductive methylation of 2'-deoxyuridine-5'-monophosphate (dUMP) to 2'-deoxythymidine-5'-monophosphate (dTMP) while utilizing 5,10-methylenetetrahydrofolate (mTHF) as the methyl donor and reductant in the reaction, yielding dihydrofolate (DHF) as a by-product. This enzymatic reaction provides an intracellular de novo source of dTMP, an essential precursor for DNA biosynthesis.</text>
</comment>
<comment type="catalytic activity">
    <reaction evidence="1">
        <text>dUMP + (6R)-5,10-methylene-5,6,7,8-tetrahydrofolate = 7,8-dihydrofolate + dTMP</text>
        <dbReference type="Rhea" id="RHEA:12104"/>
        <dbReference type="ChEBI" id="CHEBI:15636"/>
        <dbReference type="ChEBI" id="CHEBI:57451"/>
        <dbReference type="ChEBI" id="CHEBI:63528"/>
        <dbReference type="ChEBI" id="CHEBI:246422"/>
        <dbReference type="EC" id="2.1.1.45"/>
    </reaction>
</comment>
<comment type="pathway">
    <text evidence="1">Pyrimidine metabolism; dTTP biosynthesis.</text>
</comment>
<comment type="subunit">
    <text evidence="1">Homodimer.</text>
</comment>
<comment type="subcellular location">
    <subcellularLocation>
        <location evidence="1">Cytoplasm</location>
    </subcellularLocation>
</comment>
<comment type="similarity">
    <text evidence="1">Belongs to the thymidylate synthase family. Bacterial-type ThyA subfamily.</text>
</comment>
<name>TYSY_COLP3</name>
<accession>Q47Y31</accession>
<sequence>MRAYLDLCQRIIDQGTWVENERTGKRCLTVINADLEYNVGNNEFPLITTRKSFFKSAIAEFIGYIRGYDSAADFRKLGTKTWDANANLNDAWLNNTHRKGEDDMGRVYGIQGRAWAKPDGGTIDQLKKIVDNLKDGIDDRAEIMTFYNPGEFHMGCLRPCMHTHNFSLLGDTLHLTSFQRSCDVPLGLNFNQVQVFVFLALMAQITGKKAGMAYHKIVNAHIYEDQLPLMKEVQLKREPLALPKLIINPEIKSLEDLETWVTMDDFKVEGYECHEAIKYPFAV</sequence>
<proteinExistence type="inferred from homology"/>
<reference key="1">
    <citation type="journal article" date="2005" name="Proc. Natl. Acad. Sci. U.S.A.">
        <title>The psychrophilic lifestyle as revealed by the genome sequence of Colwellia psychrerythraea 34H through genomic and proteomic analyses.</title>
        <authorList>
            <person name="Methe B.A."/>
            <person name="Nelson K.E."/>
            <person name="Deming J.W."/>
            <person name="Momen B."/>
            <person name="Melamud E."/>
            <person name="Zhang X."/>
            <person name="Moult J."/>
            <person name="Madupu R."/>
            <person name="Nelson W.C."/>
            <person name="Dodson R.J."/>
            <person name="Brinkac L.M."/>
            <person name="Daugherty S.C."/>
            <person name="Durkin A.S."/>
            <person name="DeBoy R.T."/>
            <person name="Kolonay J.F."/>
            <person name="Sullivan S.A."/>
            <person name="Zhou L."/>
            <person name="Davidsen T.M."/>
            <person name="Wu M."/>
            <person name="Huston A.L."/>
            <person name="Lewis M."/>
            <person name="Weaver B."/>
            <person name="Weidman J.F."/>
            <person name="Khouri H."/>
            <person name="Utterback T.R."/>
            <person name="Feldblyum T.V."/>
            <person name="Fraser C.M."/>
        </authorList>
    </citation>
    <scope>NUCLEOTIDE SEQUENCE [LARGE SCALE GENOMIC DNA]</scope>
    <source>
        <strain>34H / ATCC BAA-681</strain>
    </source>
</reference>
<dbReference type="EC" id="2.1.1.45" evidence="1"/>
<dbReference type="EMBL" id="CP000083">
    <property type="protein sequence ID" value="AAZ25571.1"/>
    <property type="molecule type" value="Genomic_DNA"/>
</dbReference>
<dbReference type="RefSeq" id="WP_011044375.1">
    <property type="nucleotide sequence ID" value="NC_003910.7"/>
</dbReference>
<dbReference type="SMR" id="Q47Y31"/>
<dbReference type="STRING" id="167879.CPS_3621"/>
<dbReference type="KEGG" id="cps:CPS_3621"/>
<dbReference type="eggNOG" id="COG0207">
    <property type="taxonomic scope" value="Bacteria"/>
</dbReference>
<dbReference type="HOGENOM" id="CLU_021669_0_1_6"/>
<dbReference type="UniPathway" id="UPA00575"/>
<dbReference type="Proteomes" id="UP000000547">
    <property type="component" value="Chromosome"/>
</dbReference>
<dbReference type="GO" id="GO:0005829">
    <property type="term" value="C:cytosol"/>
    <property type="evidence" value="ECO:0007669"/>
    <property type="project" value="TreeGrafter"/>
</dbReference>
<dbReference type="GO" id="GO:0004799">
    <property type="term" value="F:thymidylate synthase activity"/>
    <property type="evidence" value="ECO:0007669"/>
    <property type="project" value="UniProtKB-UniRule"/>
</dbReference>
<dbReference type="GO" id="GO:0006231">
    <property type="term" value="P:dTMP biosynthetic process"/>
    <property type="evidence" value="ECO:0007669"/>
    <property type="project" value="UniProtKB-UniRule"/>
</dbReference>
<dbReference type="GO" id="GO:0006235">
    <property type="term" value="P:dTTP biosynthetic process"/>
    <property type="evidence" value="ECO:0007669"/>
    <property type="project" value="UniProtKB-UniRule"/>
</dbReference>
<dbReference type="GO" id="GO:0032259">
    <property type="term" value="P:methylation"/>
    <property type="evidence" value="ECO:0007669"/>
    <property type="project" value="UniProtKB-KW"/>
</dbReference>
<dbReference type="CDD" id="cd00351">
    <property type="entry name" value="TS_Pyrimidine_HMase"/>
    <property type="match status" value="1"/>
</dbReference>
<dbReference type="Gene3D" id="3.30.572.10">
    <property type="entry name" value="Thymidylate synthase/dCMP hydroxymethylase domain"/>
    <property type="match status" value="1"/>
</dbReference>
<dbReference type="HAMAP" id="MF_00008">
    <property type="entry name" value="Thymidy_synth_bact"/>
    <property type="match status" value="1"/>
</dbReference>
<dbReference type="InterPro" id="IPR045097">
    <property type="entry name" value="Thymidate_synth/dCMP_Mease"/>
</dbReference>
<dbReference type="InterPro" id="IPR023451">
    <property type="entry name" value="Thymidate_synth/dCMP_Mease_dom"/>
</dbReference>
<dbReference type="InterPro" id="IPR036926">
    <property type="entry name" value="Thymidate_synth/dCMP_Mease_sf"/>
</dbReference>
<dbReference type="InterPro" id="IPR000398">
    <property type="entry name" value="Thymidylate_synthase"/>
</dbReference>
<dbReference type="NCBIfam" id="NF002498">
    <property type="entry name" value="PRK01827.1-4"/>
    <property type="match status" value="1"/>
</dbReference>
<dbReference type="NCBIfam" id="TIGR03284">
    <property type="entry name" value="thym_sym"/>
    <property type="match status" value="1"/>
</dbReference>
<dbReference type="PANTHER" id="PTHR11548:SF9">
    <property type="entry name" value="THYMIDYLATE SYNTHASE"/>
    <property type="match status" value="1"/>
</dbReference>
<dbReference type="PANTHER" id="PTHR11548">
    <property type="entry name" value="THYMIDYLATE SYNTHASE 1"/>
    <property type="match status" value="1"/>
</dbReference>
<dbReference type="Pfam" id="PF00303">
    <property type="entry name" value="Thymidylat_synt"/>
    <property type="match status" value="1"/>
</dbReference>
<dbReference type="PRINTS" id="PR00108">
    <property type="entry name" value="THYMDSNTHASE"/>
</dbReference>
<dbReference type="SUPFAM" id="SSF55831">
    <property type="entry name" value="Thymidylate synthase/dCMP hydroxymethylase"/>
    <property type="match status" value="1"/>
</dbReference>
<keyword id="KW-0963">Cytoplasm</keyword>
<keyword id="KW-0489">Methyltransferase</keyword>
<keyword id="KW-0545">Nucleotide biosynthesis</keyword>
<keyword id="KW-0808">Transferase</keyword>
<protein>
    <recommendedName>
        <fullName evidence="1">Thymidylate synthase</fullName>
        <shortName evidence="1">TS</shortName>
        <shortName evidence="1">TSase</shortName>
        <ecNumber evidence="1">2.1.1.45</ecNumber>
    </recommendedName>
</protein>
<feature type="chain" id="PRO_1000000588" description="Thymidylate synthase">
    <location>
        <begin position="1"/>
        <end position="283"/>
    </location>
</feature>
<feature type="active site" description="Nucleophile" evidence="1">
    <location>
        <position position="160"/>
    </location>
</feature>
<feature type="binding site" evidence="1">
    <location>
        <position position="22"/>
    </location>
    <ligand>
        <name>dUMP</name>
        <dbReference type="ChEBI" id="CHEBI:246422"/>
    </ligand>
</feature>
<feature type="binding site" evidence="1">
    <location>
        <begin position="180"/>
        <end position="183"/>
    </location>
    <ligand>
        <name>dUMP</name>
        <dbReference type="ChEBI" id="CHEBI:246422"/>
    </ligand>
</feature>
<feature type="binding site" evidence="1">
    <location>
        <position position="183"/>
    </location>
    <ligand>
        <name>(6R)-5,10-methylene-5,6,7,8-tetrahydrofolate</name>
        <dbReference type="ChEBI" id="CHEBI:15636"/>
    </ligand>
</feature>
<feature type="binding site" evidence="1">
    <location>
        <position position="191"/>
    </location>
    <ligand>
        <name>dUMP</name>
        <dbReference type="ChEBI" id="CHEBI:246422"/>
    </ligand>
</feature>
<feature type="binding site" evidence="1">
    <location>
        <begin position="221"/>
        <end position="223"/>
    </location>
    <ligand>
        <name>dUMP</name>
        <dbReference type="ChEBI" id="CHEBI:246422"/>
    </ligand>
</feature>
<feature type="binding site" evidence="1">
    <location>
        <position position="282"/>
    </location>
    <ligand>
        <name>(6R)-5,10-methylene-5,6,7,8-tetrahydrofolate</name>
        <dbReference type="ChEBI" id="CHEBI:15636"/>
    </ligand>
</feature>